<organism>
    <name type="scientific">Homo sapiens</name>
    <name type="common">Human</name>
    <dbReference type="NCBI Taxonomy" id="9606"/>
    <lineage>
        <taxon>Eukaryota</taxon>
        <taxon>Metazoa</taxon>
        <taxon>Chordata</taxon>
        <taxon>Craniata</taxon>
        <taxon>Vertebrata</taxon>
        <taxon>Euteleostomi</taxon>
        <taxon>Mammalia</taxon>
        <taxon>Eutheria</taxon>
        <taxon>Euarchontoglires</taxon>
        <taxon>Primates</taxon>
        <taxon>Haplorrhini</taxon>
        <taxon>Catarrhini</taxon>
        <taxon>Hominidae</taxon>
        <taxon>Homo</taxon>
    </lineage>
</organism>
<dbReference type="EC" id="3.2.1.-"/>
<dbReference type="EMBL" id="M95767">
    <property type="protein sequence ID" value="AAA35684.1"/>
    <property type="molecule type" value="mRNA"/>
</dbReference>
<dbReference type="EMBL" id="AF085706">
    <property type="protein sequence ID" value="AAC35852.1"/>
    <property type="molecule type" value="Genomic_DNA"/>
</dbReference>
<dbReference type="EMBL" id="AF085700">
    <property type="protein sequence ID" value="AAC35852.1"/>
    <property type="status" value="JOINED"/>
    <property type="molecule type" value="Genomic_DNA"/>
</dbReference>
<dbReference type="EMBL" id="AF085701">
    <property type="protein sequence ID" value="AAC35852.1"/>
    <property type="status" value="JOINED"/>
    <property type="molecule type" value="Genomic_DNA"/>
</dbReference>
<dbReference type="EMBL" id="AF085702">
    <property type="protein sequence ID" value="AAC35852.1"/>
    <property type="status" value="JOINED"/>
    <property type="molecule type" value="Genomic_DNA"/>
</dbReference>
<dbReference type="EMBL" id="AF085703">
    <property type="protein sequence ID" value="AAC35852.1"/>
    <property type="status" value="JOINED"/>
    <property type="molecule type" value="Genomic_DNA"/>
</dbReference>
<dbReference type="EMBL" id="AF085704">
    <property type="protein sequence ID" value="AAC35852.1"/>
    <property type="status" value="JOINED"/>
    <property type="molecule type" value="Genomic_DNA"/>
</dbReference>
<dbReference type="EMBL" id="AF085705">
    <property type="protein sequence ID" value="AAC35852.1"/>
    <property type="status" value="JOINED"/>
    <property type="molecule type" value="Genomic_DNA"/>
</dbReference>
<dbReference type="EMBL" id="AL359762">
    <property type="status" value="NOT_ANNOTATED_CDS"/>
    <property type="molecule type" value="Genomic_DNA"/>
</dbReference>
<dbReference type="EMBL" id="CH471097">
    <property type="protein sequence ID" value="EAW73232.1"/>
    <property type="molecule type" value="Genomic_DNA"/>
</dbReference>
<dbReference type="EMBL" id="CH471097">
    <property type="protein sequence ID" value="EAW73233.1"/>
    <property type="molecule type" value="Genomic_DNA"/>
</dbReference>
<dbReference type="EMBL" id="BC126333">
    <property type="protein sequence ID" value="AAI26334.1"/>
    <property type="molecule type" value="mRNA"/>
</dbReference>
<dbReference type="EMBL" id="BC126335">
    <property type="protein sequence ID" value="AAI26336.1"/>
    <property type="molecule type" value="mRNA"/>
</dbReference>
<dbReference type="CCDS" id="CCDS698.1"/>
<dbReference type="PIR" id="A44102">
    <property type="entry name" value="A44102"/>
</dbReference>
<dbReference type="RefSeq" id="NP_004379.1">
    <property type="nucleotide sequence ID" value="NM_004388.3"/>
</dbReference>
<dbReference type="SMR" id="Q01459"/>
<dbReference type="BioGRID" id="107868">
    <property type="interactions" value="61"/>
</dbReference>
<dbReference type="FunCoup" id="Q01459">
    <property type="interactions" value="254"/>
</dbReference>
<dbReference type="IntAct" id="Q01459">
    <property type="interactions" value="29"/>
</dbReference>
<dbReference type="STRING" id="9606.ENSP00000359664"/>
<dbReference type="CAZy" id="GH18">
    <property type="family name" value="Glycoside Hydrolase Family 18"/>
</dbReference>
<dbReference type="GlyConnect" id="1173">
    <property type="glycosylation" value="3 N-Linked glycans (1 site)"/>
</dbReference>
<dbReference type="GlyCosmos" id="Q01459">
    <property type="glycosylation" value="4 sites, 3 glycans"/>
</dbReference>
<dbReference type="GlyGen" id="Q01459">
    <property type="glycosylation" value="5 sites, 19 N-linked glycans (2 sites), 1 O-linked glycan (1 site)"/>
</dbReference>
<dbReference type="iPTMnet" id="Q01459"/>
<dbReference type="PhosphoSitePlus" id="Q01459"/>
<dbReference type="SwissPalm" id="Q01459"/>
<dbReference type="BioMuta" id="CTBS"/>
<dbReference type="DMDM" id="399376"/>
<dbReference type="jPOST" id="Q01459"/>
<dbReference type="MassIVE" id="Q01459"/>
<dbReference type="PaxDb" id="9606-ENSP00000359664"/>
<dbReference type="PeptideAtlas" id="Q01459"/>
<dbReference type="ProteomicsDB" id="57956"/>
<dbReference type="Antibodypedia" id="4472">
    <property type="antibodies" value="163 antibodies from 26 providers"/>
</dbReference>
<dbReference type="DNASU" id="1486"/>
<dbReference type="Ensembl" id="ENST00000370630.6">
    <property type="protein sequence ID" value="ENSP00000359664.4"/>
    <property type="gene ID" value="ENSG00000117151.13"/>
</dbReference>
<dbReference type="GeneID" id="1486"/>
<dbReference type="KEGG" id="hsa:1486"/>
<dbReference type="MANE-Select" id="ENST00000370630.6">
    <property type="protein sequence ID" value="ENSP00000359664.4"/>
    <property type="RefSeq nucleotide sequence ID" value="NM_004388.3"/>
    <property type="RefSeq protein sequence ID" value="NP_004379.1"/>
</dbReference>
<dbReference type="UCSC" id="uc001dka.3">
    <property type="organism name" value="human"/>
</dbReference>
<dbReference type="AGR" id="HGNC:2496"/>
<dbReference type="CTD" id="1486"/>
<dbReference type="DisGeNET" id="1486"/>
<dbReference type="GeneCards" id="CTBS"/>
<dbReference type="HGNC" id="HGNC:2496">
    <property type="gene designation" value="CTBS"/>
</dbReference>
<dbReference type="HPA" id="ENSG00000117151">
    <property type="expression patterns" value="Low tissue specificity"/>
</dbReference>
<dbReference type="MIM" id="600873">
    <property type="type" value="gene"/>
</dbReference>
<dbReference type="neXtProt" id="NX_Q01459"/>
<dbReference type="OpenTargets" id="ENSG00000117151"/>
<dbReference type="PharmGKB" id="PA26997"/>
<dbReference type="VEuPathDB" id="HostDB:ENSG00000117151"/>
<dbReference type="eggNOG" id="KOG2806">
    <property type="taxonomic scope" value="Eukaryota"/>
</dbReference>
<dbReference type="GeneTree" id="ENSGT00390000012891"/>
<dbReference type="HOGENOM" id="CLU_061189_1_0_1"/>
<dbReference type="InParanoid" id="Q01459"/>
<dbReference type="OMA" id="KWIMKQV"/>
<dbReference type="OrthoDB" id="73875at2759"/>
<dbReference type="PAN-GO" id="Q01459">
    <property type="GO annotations" value="3 GO annotations based on evolutionary models"/>
</dbReference>
<dbReference type="PhylomeDB" id="Q01459"/>
<dbReference type="TreeFam" id="TF332677"/>
<dbReference type="PathwayCommons" id="Q01459"/>
<dbReference type="SignaLink" id="Q01459"/>
<dbReference type="BioGRID-ORCS" id="1486">
    <property type="hits" value="13 hits in 1151 CRISPR screens"/>
</dbReference>
<dbReference type="ChiTaRS" id="CTBS">
    <property type="organism name" value="human"/>
</dbReference>
<dbReference type="GeneWiki" id="CTBS"/>
<dbReference type="GenomeRNAi" id="1486"/>
<dbReference type="Pharos" id="Q01459">
    <property type="development level" value="Tbio"/>
</dbReference>
<dbReference type="PRO" id="PR:Q01459"/>
<dbReference type="Proteomes" id="UP000005640">
    <property type="component" value="Chromosome 1"/>
</dbReference>
<dbReference type="RNAct" id="Q01459">
    <property type="molecule type" value="protein"/>
</dbReference>
<dbReference type="Bgee" id="ENSG00000117151">
    <property type="expression patterns" value="Expressed in choroid plexus epithelium and 170 other cell types or tissues"/>
</dbReference>
<dbReference type="ExpressionAtlas" id="Q01459">
    <property type="expression patterns" value="baseline and differential"/>
</dbReference>
<dbReference type="GO" id="GO:0005615">
    <property type="term" value="C:extracellular space"/>
    <property type="evidence" value="ECO:0007005"/>
    <property type="project" value="UniProtKB"/>
</dbReference>
<dbReference type="GO" id="GO:0005764">
    <property type="term" value="C:lysosome"/>
    <property type="evidence" value="ECO:0007669"/>
    <property type="project" value="UniProtKB-SubCell"/>
</dbReference>
<dbReference type="GO" id="GO:0008061">
    <property type="term" value="F:chitin binding"/>
    <property type="evidence" value="ECO:0007669"/>
    <property type="project" value="InterPro"/>
</dbReference>
<dbReference type="GO" id="GO:0004568">
    <property type="term" value="F:chitinase activity"/>
    <property type="evidence" value="ECO:0000318"/>
    <property type="project" value="GO_Central"/>
</dbReference>
<dbReference type="GO" id="GO:0006032">
    <property type="term" value="P:chitin catabolic process"/>
    <property type="evidence" value="ECO:0000318"/>
    <property type="project" value="GO_Central"/>
</dbReference>
<dbReference type="GO" id="GO:0009313">
    <property type="term" value="P:oligosaccharide catabolic process"/>
    <property type="evidence" value="ECO:0000318"/>
    <property type="project" value="GO_Central"/>
</dbReference>
<dbReference type="CDD" id="cd02875">
    <property type="entry name" value="GH18_chitobiase"/>
    <property type="match status" value="1"/>
</dbReference>
<dbReference type="FunFam" id="3.10.50.10:FF:000006">
    <property type="entry name" value="Chitobiase, di-N-acetyl"/>
    <property type="match status" value="1"/>
</dbReference>
<dbReference type="FunFam" id="3.20.20.80:FF:000250">
    <property type="entry name" value="Probable di-N-acetylchitobiase 1"/>
    <property type="match status" value="1"/>
</dbReference>
<dbReference type="Gene3D" id="3.10.50.10">
    <property type="match status" value="1"/>
</dbReference>
<dbReference type="Gene3D" id="3.20.20.80">
    <property type="entry name" value="Glycosidases"/>
    <property type="match status" value="1"/>
</dbReference>
<dbReference type="InterPro" id="IPR011583">
    <property type="entry name" value="Chitinase_II/V-like_cat"/>
</dbReference>
<dbReference type="InterPro" id="IPR029070">
    <property type="entry name" value="Chitinase_insertion_sf"/>
</dbReference>
<dbReference type="InterPro" id="IPR047898">
    <property type="entry name" value="DIAC_cat"/>
</dbReference>
<dbReference type="InterPro" id="IPR051887">
    <property type="entry name" value="GH18_Domain-Containing"/>
</dbReference>
<dbReference type="InterPro" id="IPR001223">
    <property type="entry name" value="Glyco_hydro18_cat"/>
</dbReference>
<dbReference type="InterPro" id="IPR001579">
    <property type="entry name" value="Glyco_hydro_18_chit_AS"/>
</dbReference>
<dbReference type="InterPro" id="IPR017853">
    <property type="entry name" value="Glycoside_hydrolase_SF"/>
</dbReference>
<dbReference type="PANTHER" id="PTHR46290">
    <property type="entry name" value="DI-N-ACETYLCHITOBIASE"/>
    <property type="match status" value="1"/>
</dbReference>
<dbReference type="PANTHER" id="PTHR46290:SF1">
    <property type="entry name" value="DI-N-ACETYLCHITOBIASE"/>
    <property type="match status" value="1"/>
</dbReference>
<dbReference type="Pfam" id="PF00704">
    <property type="entry name" value="Glyco_hydro_18"/>
    <property type="match status" value="1"/>
</dbReference>
<dbReference type="SMART" id="SM00636">
    <property type="entry name" value="Glyco_18"/>
    <property type="match status" value="1"/>
</dbReference>
<dbReference type="SUPFAM" id="SSF51445">
    <property type="entry name" value="(Trans)glycosidases"/>
    <property type="match status" value="1"/>
</dbReference>
<dbReference type="PROSITE" id="PS01095">
    <property type="entry name" value="GH18_1"/>
    <property type="match status" value="1"/>
</dbReference>
<dbReference type="PROSITE" id="PS51910">
    <property type="entry name" value="GH18_2"/>
    <property type="match status" value="1"/>
</dbReference>
<protein>
    <recommendedName>
        <fullName>Di-N-acetylchitobiase</fullName>
        <ecNumber>3.2.1.-</ecNumber>
    </recommendedName>
</protein>
<accession>Q01459</accession>
<accession>Q5VX50</accession>
<feature type="signal peptide" evidence="1">
    <location>
        <begin position="1"/>
        <end position="38"/>
    </location>
</feature>
<feature type="chain" id="PRO_0000011961" description="Di-N-acetylchitobiase">
    <location>
        <begin position="39"/>
        <end position="385"/>
    </location>
</feature>
<feature type="domain" description="GH18" evidence="3">
    <location>
        <begin position="39"/>
        <end position="385"/>
    </location>
</feature>
<feature type="active site" description="Proton donor" evidence="3">
    <location>
        <position position="143"/>
    </location>
</feature>
<feature type="glycosylation site" description="N-linked (GlcNAc...) asparagine" evidence="2">
    <location>
        <position position="193"/>
    </location>
</feature>
<feature type="glycosylation site" description="N-linked (GlcNAc...) asparagine" evidence="2">
    <location>
        <position position="228"/>
    </location>
</feature>
<feature type="glycosylation site" description="N-linked (GlcNAc...) asparagine" evidence="2">
    <location>
        <position position="262"/>
    </location>
</feature>
<feature type="glycosylation site" description="N-linked (GlcNAc...) asparagine" evidence="4">
    <location>
        <position position="299"/>
    </location>
</feature>
<feature type="sequence variant" id="VAR_049197" description="In dbSNP:rs15911.">
    <original>V</original>
    <variation>I</variation>
    <location>
        <position position="274"/>
    </location>
</feature>
<feature type="sequence variant" id="VAR_020160" description="In dbSNP:rs3768249.">
    <original>D</original>
    <variation>Y</variation>
    <location>
        <position position="310"/>
    </location>
</feature>
<reference key="1">
    <citation type="journal article" date="1992" name="J. Biol. Chem.">
        <title>Cloning and expression of the cDNA sequence encoding the lysosomal glycosidase di-N-acetylchitobiase.</title>
        <authorList>
            <person name="Fisher K.J."/>
            <person name="Aronson N.N. Jr."/>
        </authorList>
    </citation>
    <scope>NUCLEOTIDE SEQUENCE [MRNA]</scope>
    <source>
        <tissue>Placenta</tissue>
    </source>
</reference>
<reference key="2">
    <citation type="journal article" date="1999" name="Glycobiology">
        <title>Structure of the human gene for lysosomal di-N-acetylchitobiase.</title>
        <authorList>
            <person name="Liu B."/>
            <person name="Ahmad W."/>
            <person name="Aronson N.N. Jr."/>
        </authorList>
    </citation>
    <scope>NUCLEOTIDE SEQUENCE [GENOMIC DNA]</scope>
</reference>
<reference key="3">
    <citation type="journal article" date="2006" name="Nature">
        <title>The DNA sequence and biological annotation of human chromosome 1.</title>
        <authorList>
            <person name="Gregory S.G."/>
            <person name="Barlow K.F."/>
            <person name="McLay K.E."/>
            <person name="Kaul R."/>
            <person name="Swarbreck D."/>
            <person name="Dunham A."/>
            <person name="Scott C.E."/>
            <person name="Howe K.L."/>
            <person name="Woodfine K."/>
            <person name="Spencer C.C.A."/>
            <person name="Jones M.C."/>
            <person name="Gillson C."/>
            <person name="Searle S."/>
            <person name="Zhou Y."/>
            <person name="Kokocinski F."/>
            <person name="McDonald L."/>
            <person name="Evans R."/>
            <person name="Phillips K."/>
            <person name="Atkinson A."/>
            <person name="Cooper R."/>
            <person name="Jones C."/>
            <person name="Hall R.E."/>
            <person name="Andrews T.D."/>
            <person name="Lloyd C."/>
            <person name="Ainscough R."/>
            <person name="Almeida J.P."/>
            <person name="Ambrose K.D."/>
            <person name="Anderson F."/>
            <person name="Andrew R.W."/>
            <person name="Ashwell R.I.S."/>
            <person name="Aubin K."/>
            <person name="Babbage A.K."/>
            <person name="Bagguley C.L."/>
            <person name="Bailey J."/>
            <person name="Beasley H."/>
            <person name="Bethel G."/>
            <person name="Bird C.P."/>
            <person name="Bray-Allen S."/>
            <person name="Brown J.Y."/>
            <person name="Brown A.J."/>
            <person name="Buckley D."/>
            <person name="Burton J."/>
            <person name="Bye J."/>
            <person name="Carder C."/>
            <person name="Chapman J.C."/>
            <person name="Clark S.Y."/>
            <person name="Clarke G."/>
            <person name="Clee C."/>
            <person name="Cobley V."/>
            <person name="Collier R.E."/>
            <person name="Corby N."/>
            <person name="Coville G.J."/>
            <person name="Davies J."/>
            <person name="Deadman R."/>
            <person name="Dunn M."/>
            <person name="Earthrowl M."/>
            <person name="Ellington A.G."/>
            <person name="Errington H."/>
            <person name="Frankish A."/>
            <person name="Frankland J."/>
            <person name="French L."/>
            <person name="Garner P."/>
            <person name="Garnett J."/>
            <person name="Gay L."/>
            <person name="Ghori M.R.J."/>
            <person name="Gibson R."/>
            <person name="Gilby L.M."/>
            <person name="Gillett W."/>
            <person name="Glithero R.J."/>
            <person name="Grafham D.V."/>
            <person name="Griffiths C."/>
            <person name="Griffiths-Jones S."/>
            <person name="Grocock R."/>
            <person name="Hammond S."/>
            <person name="Harrison E.S.I."/>
            <person name="Hart E."/>
            <person name="Haugen E."/>
            <person name="Heath P.D."/>
            <person name="Holmes S."/>
            <person name="Holt K."/>
            <person name="Howden P.J."/>
            <person name="Hunt A.R."/>
            <person name="Hunt S.E."/>
            <person name="Hunter G."/>
            <person name="Isherwood J."/>
            <person name="James R."/>
            <person name="Johnson C."/>
            <person name="Johnson D."/>
            <person name="Joy A."/>
            <person name="Kay M."/>
            <person name="Kershaw J.K."/>
            <person name="Kibukawa M."/>
            <person name="Kimberley A.M."/>
            <person name="King A."/>
            <person name="Knights A.J."/>
            <person name="Lad H."/>
            <person name="Laird G."/>
            <person name="Lawlor S."/>
            <person name="Leongamornlert D.A."/>
            <person name="Lloyd D.M."/>
            <person name="Loveland J."/>
            <person name="Lovell J."/>
            <person name="Lush M.J."/>
            <person name="Lyne R."/>
            <person name="Martin S."/>
            <person name="Mashreghi-Mohammadi M."/>
            <person name="Matthews L."/>
            <person name="Matthews N.S.W."/>
            <person name="McLaren S."/>
            <person name="Milne S."/>
            <person name="Mistry S."/>
            <person name="Moore M.J.F."/>
            <person name="Nickerson T."/>
            <person name="O'Dell C.N."/>
            <person name="Oliver K."/>
            <person name="Palmeiri A."/>
            <person name="Palmer S.A."/>
            <person name="Parker A."/>
            <person name="Patel D."/>
            <person name="Pearce A.V."/>
            <person name="Peck A.I."/>
            <person name="Pelan S."/>
            <person name="Phelps K."/>
            <person name="Phillimore B.J."/>
            <person name="Plumb R."/>
            <person name="Rajan J."/>
            <person name="Raymond C."/>
            <person name="Rouse G."/>
            <person name="Saenphimmachak C."/>
            <person name="Sehra H.K."/>
            <person name="Sheridan E."/>
            <person name="Shownkeen R."/>
            <person name="Sims S."/>
            <person name="Skuce C.D."/>
            <person name="Smith M."/>
            <person name="Steward C."/>
            <person name="Subramanian S."/>
            <person name="Sycamore N."/>
            <person name="Tracey A."/>
            <person name="Tromans A."/>
            <person name="Van Helmond Z."/>
            <person name="Wall M."/>
            <person name="Wallis J.M."/>
            <person name="White S."/>
            <person name="Whitehead S.L."/>
            <person name="Wilkinson J.E."/>
            <person name="Willey D.L."/>
            <person name="Williams H."/>
            <person name="Wilming L."/>
            <person name="Wray P.W."/>
            <person name="Wu Z."/>
            <person name="Coulson A."/>
            <person name="Vaudin M."/>
            <person name="Sulston J.E."/>
            <person name="Durbin R.M."/>
            <person name="Hubbard T."/>
            <person name="Wooster R."/>
            <person name="Dunham I."/>
            <person name="Carter N.P."/>
            <person name="McVean G."/>
            <person name="Ross M.T."/>
            <person name="Harrow J."/>
            <person name="Olson M.V."/>
            <person name="Beck S."/>
            <person name="Rogers J."/>
            <person name="Bentley D.R."/>
        </authorList>
    </citation>
    <scope>NUCLEOTIDE SEQUENCE [LARGE SCALE GENOMIC DNA]</scope>
</reference>
<reference key="4">
    <citation type="submission" date="2005-09" db="EMBL/GenBank/DDBJ databases">
        <authorList>
            <person name="Mural R.J."/>
            <person name="Istrail S."/>
            <person name="Sutton G."/>
            <person name="Florea L."/>
            <person name="Halpern A.L."/>
            <person name="Mobarry C.M."/>
            <person name="Lippert R."/>
            <person name="Walenz B."/>
            <person name="Shatkay H."/>
            <person name="Dew I."/>
            <person name="Miller J.R."/>
            <person name="Flanigan M.J."/>
            <person name="Edwards N.J."/>
            <person name="Bolanos R."/>
            <person name="Fasulo D."/>
            <person name="Halldorsson B.V."/>
            <person name="Hannenhalli S."/>
            <person name="Turner R."/>
            <person name="Yooseph S."/>
            <person name="Lu F."/>
            <person name="Nusskern D.R."/>
            <person name="Shue B.C."/>
            <person name="Zheng X.H."/>
            <person name="Zhong F."/>
            <person name="Delcher A.L."/>
            <person name="Huson D.H."/>
            <person name="Kravitz S.A."/>
            <person name="Mouchard L."/>
            <person name="Reinert K."/>
            <person name="Remington K.A."/>
            <person name="Clark A.G."/>
            <person name="Waterman M.S."/>
            <person name="Eichler E.E."/>
            <person name="Adams M.D."/>
            <person name="Hunkapiller M.W."/>
            <person name="Myers E.W."/>
            <person name="Venter J.C."/>
        </authorList>
    </citation>
    <scope>NUCLEOTIDE SEQUENCE [LARGE SCALE GENOMIC DNA]</scope>
</reference>
<reference key="5">
    <citation type="journal article" date="2004" name="Genome Res.">
        <title>The status, quality, and expansion of the NIH full-length cDNA project: the Mammalian Gene Collection (MGC).</title>
        <authorList>
            <consortium name="The MGC Project Team"/>
        </authorList>
    </citation>
    <scope>NUCLEOTIDE SEQUENCE [LARGE SCALE MRNA]</scope>
    <source>
        <tissue>Brain</tissue>
    </source>
</reference>
<reference key="6">
    <citation type="journal article" date="2009" name="J. Proteome Res.">
        <title>Glycoproteomics analysis of human liver tissue by combination of multiple enzyme digestion and hydrazide chemistry.</title>
        <authorList>
            <person name="Chen R."/>
            <person name="Jiang X."/>
            <person name="Sun D."/>
            <person name="Han G."/>
            <person name="Wang F."/>
            <person name="Ye M."/>
            <person name="Wang L."/>
            <person name="Zou H."/>
        </authorList>
    </citation>
    <scope>GLYCOSYLATION [LARGE SCALE ANALYSIS] AT ASN-299</scope>
    <source>
        <tissue>Liver</tissue>
    </source>
</reference>
<evidence type="ECO:0000250" key="1"/>
<evidence type="ECO:0000255" key="2"/>
<evidence type="ECO:0000255" key="3">
    <source>
        <dbReference type="PROSITE-ProRule" id="PRU01258"/>
    </source>
</evidence>
<evidence type="ECO:0000269" key="4">
    <source>
    </source>
</evidence>
<evidence type="ECO:0000305" key="5"/>
<name>DIAC_HUMAN</name>
<gene>
    <name type="primary">CTBS</name>
    <name type="synonym">CTB</name>
</gene>
<keyword id="KW-0325">Glycoprotein</keyword>
<keyword id="KW-0326">Glycosidase</keyword>
<keyword id="KW-0378">Hydrolase</keyword>
<keyword id="KW-0458">Lysosome</keyword>
<keyword id="KW-1267">Proteomics identification</keyword>
<keyword id="KW-1185">Reference proteome</keyword>
<keyword id="KW-0732">Signal</keyword>
<sequence>MSRPQLRRWRLVSSPPSGVPGLALLALLALLALRLAAGTDCPCPEPELCRPIRHHPDFEVFVFDVGQKTWKSYDWSQITTVATFGKYDSELMCYAHSKGARVVLKGDVSLKDIIDPAFRASWIAQKLNLAKTQYMDGINIDIEQEVNCLSPEYDALTALVKETTDSFHREIEGSQVTFDVAWSPKNIDRRCYNYTGIADACDFLFVMSYDEQSQIWSECIAAANAPYNQTLTGYNDYIKMSINPKKLVMGVPWYGYDYTCLNLSEDHVCTIAKVPFRGAPCSDAAGRQVPYKTIMKQINSSISGNLWDKDQRAPYYNYKDPAGHFHQVWYDNPQSISLKATYIQNYRLRGIGMWNANCLDYSGDAVAKQQTEEMWEVLKPKLLQR</sequence>
<comment type="function">
    <text>Involved in the degradation of asparagine-linked glycoproteins. Hydrolyze of N-acetyl-beta-D-glucosamine (1-4)N-acetylglucosamine chitobiose core from the reducing end of the bond, it requires prior cleavage by glycosylasparaginase.</text>
</comment>
<comment type="subcellular location">
    <subcellularLocation>
        <location>Lysosome</location>
    </subcellularLocation>
</comment>
<comment type="similarity">
    <text evidence="5">Belongs to the glycosyl hydrolase 18 family.</text>
</comment>
<proteinExistence type="evidence at protein level"/>